<protein>
    <recommendedName>
        <fullName evidence="6">Yes-associated protein homolog 1</fullName>
    </recommendedName>
</protein>
<feature type="chain" id="PRO_0000432474" description="Yes-associated protein homolog 1" evidence="5">
    <location>
        <begin position="1"/>
        <end position="442"/>
    </location>
</feature>
<feature type="domain" description="WW" evidence="1">
    <location>
        <begin position="203"/>
        <end position="236"/>
    </location>
</feature>
<feature type="region of interest" description="Disordered" evidence="2">
    <location>
        <begin position="1"/>
        <end position="84"/>
    </location>
</feature>
<feature type="region of interest" description="Disordered" evidence="2">
    <location>
        <begin position="108"/>
        <end position="136"/>
    </location>
</feature>
<feature type="compositionally biased region" description="Basic residues" evidence="2">
    <location>
        <begin position="1"/>
        <end position="10"/>
    </location>
</feature>
<feature type="compositionally biased region" description="Polar residues" evidence="2">
    <location>
        <begin position="13"/>
        <end position="22"/>
    </location>
</feature>
<feature type="compositionally biased region" description="Polar residues" evidence="2">
    <location>
        <begin position="55"/>
        <end position="71"/>
    </location>
</feature>
<feature type="compositionally biased region" description="Polar residues" evidence="2">
    <location>
        <begin position="108"/>
        <end position="120"/>
    </location>
</feature>
<feature type="compositionally biased region" description="Basic residues" evidence="2">
    <location>
        <begin position="124"/>
        <end position="134"/>
    </location>
</feature>
<feature type="modified residue" description="Phosphoserine" evidence="3">
    <location>
        <position position="104"/>
    </location>
</feature>
<feature type="mutagenesis site" description="Cytoplasmic localization. No significant effect on nucleocytoplasmic localization." evidence="3">
    <original>S</original>
    <variation>A</variation>
    <location>
        <position position="104"/>
    </location>
</feature>
<comment type="function">
    <text evidence="3">Plays a role in thermal stress response and in aging.</text>
</comment>
<comment type="subunit">
    <text evidence="3">Interacts (via WW domain) with wts-1 (via N-terminus). Interacts (via WW domain) with egl-44; the interaction may regulate transcription.</text>
</comment>
<comment type="subcellular location">
    <subcellularLocation>
        <location evidence="3">Cytoplasm</location>
    </subcellularLocation>
    <subcellularLocation>
        <location evidence="3">Nucleus</location>
    </subcellularLocation>
    <subcellularLocation>
        <location evidence="4">Cell projection</location>
        <location evidence="4">Cilium</location>
    </subcellularLocation>
    <subcellularLocation>
        <location evidence="4">Cytoplasm</location>
        <location evidence="4">Cytoskeleton</location>
        <location evidence="4">Cilium axoneme</location>
    </subcellularLocation>
    <text evidence="3 4">Cytoplasmic localization is regulated by wts-1 and ftt-2 (PubMed:23396260). Localizes in the cytoplasm when phosphorylated at Ser-104 (PubMed:23396260). Transient nuclear localization in hypodermal cells upon heat shock treatment (PubMed:23396260). Nuclear export after heat shock treatment is regulated by wts-1, ftt-2, hsf-1 and daf-21 (PubMed:23396260). During the embryonic development of dorsal epithelial cells, localizes transiently in the nucleus (PubMed:23396260). Mainly cytoplasmic during embryo elongation (PubMed:23396260). Localizes to the base of the cilium (PubMed:27930654).</text>
</comment>
<comment type="tissue specificity">
    <text evidence="3">Expressed in epithelia, hypodermis, muscles, pharynx, intestine, gonadal sheath cells, vulva, spermatheca and in excretory tissue.</text>
</comment>
<comment type="disruption phenotype">
    <text evidence="3">RNAi-mediated knockdown at L1 stage results in vulva protrusion and rupture of internal tissues resulting in premature death. RNAi-mediated knockdown in middle-aged adults extends their lifespan.</text>
</comment>
<comment type="similarity">
    <text evidence="5">Belongs to the YAP1 family. Highly divergent.</text>
</comment>
<name>YAP1_CAEEL</name>
<keyword id="KW-0966">Cell projection</keyword>
<keyword id="KW-0969">Cilium</keyword>
<keyword id="KW-0963">Cytoplasm</keyword>
<keyword id="KW-0206">Cytoskeleton</keyword>
<keyword id="KW-0539">Nucleus</keyword>
<keyword id="KW-0597">Phosphoprotein</keyword>
<keyword id="KW-1185">Reference proteome</keyword>
<evidence type="ECO:0000255" key="1">
    <source>
        <dbReference type="PROSITE-ProRule" id="PRU00224"/>
    </source>
</evidence>
<evidence type="ECO:0000256" key="2">
    <source>
        <dbReference type="SAM" id="MobiDB-lite"/>
    </source>
</evidence>
<evidence type="ECO:0000269" key="3">
    <source>
    </source>
</evidence>
<evidence type="ECO:0000269" key="4">
    <source>
    </source>
</evidence>
<evidence type="ECO:0000305" key="5"/>
<evidence type="ECO:0000305" key="6">
    <source>
    </source>
</evidence>
<evidence type="ECO:0000312" key="7">
    <source>
        <dbReference type="Proteomes" id="UP000001940"/>
    </source>
</evidence>
<evidence type="ECO:0000312" key="8">
    <source>
        <dbReference type="WormBase" id="F13E6.4"/>
    </source>
</evidence>
<proteinExistence type="evidence at protein level"/>
<reference evidence="7" key="1">
    <citation type="journal article" date="1998" name="Science">
        <title>Genome sequence of the nematode C. elegans: a platform for investigating biology.</title>
        <authorList>
            <consortium name="The C. elegans sequencing consortium"/>
        </authorList>
    </citation>
    <scope>NUCLEOTIDE SEQUENCE [LARGE SCALE GENOMIC DNA]</scope>
    <source>
        <strain evidence="7">Bristol N2</strain>
    </source>
</reference>
<reference evidence="5" key="2">
    <citation type="journal article" date="2013" name="Exp. Cell Res.">
        <title>Yes-associated protein homolog, YAP-1, is involved in the thermotolerance and aging in the nematode Caenorhabditis elegans.</title>
        <authorList>
            <person name="Iwasa H."/>
            <person name="Maimaiti S."/>
            <person name="Kuroyanagi H."/>
            <person name="Kawano S."/>
            <person name="Inami K."/>
            <person name="Timalsina S."/>
            <person name="Ikeda M."/>
            <person name="Nakagawa K."/>
            <person name="Hata Y."/>
        </authorList>
    </citation>
    <scope>FUNCTION</scope>
    <scope>INTERACTION WITH WTS-1 AND EGL-44</scope>
    <scope>SUBCELLULAR LOCATION</scope>
    <scope>TISSUE SPECIFICITY</scope>
    <scope>DISRUPTION PHENOTYPE</scope>
    <scope>MUTAGENESIS OF SER-104</scope>
    <scope>PHOSPHORYLATION AT SER-104</scope>
</reference>
<reference key="3">
    <citation type="journal article" date="2016" name="PLoS Genet.">
        <title>Whole-organism developmental expression profiling identifies rab-28 as a novel ciliary GTPase associated with the BBSome and intraflagellar transport.</title>
        <authorList>
            <person name="Jensen V.L."/>
            <person name="Carter S."/>
            <person name="Sanders A.A."/>
            <person name="Li C."/>
            <person name="Kennedy J."/>
            <person name="Timbers T.A."/>
            <person name="Cai J."/>
            <person name="Scheidel N."/>
            <person name="Kennedy B.N."/>
            <person name="Morin R.D."/>
            <person name="Leroux M.R."/>
            <person name="Blacque O.E."/>
        </authorList>
    </citation>
    <scope>SUBCELLULAR LOCATION</scope>
</reference>
<sequence>MASKSIHKKHQENSQQDKNQFSVHHYLDPNQSIHALISCSEKKYEKNQNQKKNPLPSSYYHQKRNPGSSAHSPYGSVDESSRTAVSPAMDMVSNQAPIHTRQVSAPNLHTSVNNGQSSATVPHPSHHNVHHQHSKSVSALPMTIGYSPVPSHVKSVSHEANYSYAGLSEIPQQQGMMQQNREKSLSLDPMRRPFMTPQDVEQLPMPQGWEMCYDSDGVRYFKDHNSKTTTWDDPRLKQQEQTGFGLGENIGQNRYNNCYDNGHSSRSLPSIHQHQQMIPNHPQPQYSSQQQMDYIQQLQNERMMIQEKNAQLINSGLVDSPQPPYQAISPMSSTMMHSHDPNFMYQQQQQAQNSQQQQTPHTLHQIPNQYQNSQMNDDSAMEVDYSMVSHPQQLQHQHQPHMHNNMPSNYVIDDINPHEFDQYLQISNDNNRGVGSMVHHYQ</sequence>
<dbReference type="EMBL" id="Z68105">
    <property type="protein sequence ID" value="CAA92121.2"/>
    <property type="molecule type" value="Genomic_DNA"/>
</dbReference>
<dbReference type="PIR" id="G89632">
    <property type="entry name" value="G89632"/>
</dbReference>
<dbReference type="RefSeq" id="NP_001369894.1">
    <property type="nucleotide sequence ID" value="NM_001383638.1"/>
</dbReference>
<dbReference type="RefSeq" id="NP_509789.2">
    <property type="nucleotide sequence ID" value="NM_077388.4"/>
</dbReference>
<dbReference type="SMR" id="Q19404"/>
<dbReference type="DIP" id="DIP-25866N"/>
<dbReference type="FunCoup" id="Q19404">
    <property type="interactions" value="10"/>
</dbReference>
<dbReference type="IntAct" id="Q19404">
    <property type="interactions" value="2"/>
</dbReference>
<dbReference type="STRING" id="6239.F13E6.4.1"/>
<dbReference type="iPTMnet" id="Q19404"/>
<dbReference type="PaxDb" id="6239-F13E6.4"/>
<dbReference type="PeptideAtlas" id="Q19404"/>
<dbReference type="EnsemblMetazoa" id="F13E6.4.1">
    <property type="protein sequence ID" value="F13E6.4.1"/>
    <property type="gene ID" value="WBGene00008748"/>
</dbReference>
<dbReference type="GeneID" id="181267"/>
<dbReference type="UCSC" id="F13E6.4">
    <property type="organism name" value="c. elegans"/>
</dbReference>
<dbReference type="AGR" id="WB:WBGene00008748"/>
<dbReference type="WormBase" id="F13E6.4">
    <property type="protein sequence ID" value="CE37348"/>
    <property type="gene ID" value="WBGene00008748"/>
    <property type="gene designation" value="yap-1"/>
</dbReference>
<dbReference type="eggNOG" id="KOG0940">
    <property type="taxonomic scope" value="Eukaryota"/>
</dbReference>
<dbReference type="GeneTree" id="ENSGT00510000046760"/>
<dbReference type="HOGENOM" id="CLU_630441_0_0_1"/>
<dbReference type="InParanoid" id="Q19404"/>
<dbReference type="OMA" id="GSMVHHY"/>
<dbReference type="OrthoDB" id="2020426at2759"/>
<dbReference type="Reactome" id="R-CEL-1251985">
    <property type="pathway name" value="Nuclear signaling by ERBB4"/>
</dbReference>
<dbReference type="Reactome" id="R-CEL-2028269">
    <property type="pathway name" value="Signaling by Hippo"/>
</dbReference>
<dbReference type="Reactome" id="R-CEL-2032785">
    <property type="pathway name" value="YAP1- and WWTR1 (TAZ)-stimulated gene expression"/>
</dbReference>
<dbReference type="Reactome" id="R-CEL-2173796">
    <property type="pathway name" value="SMAD2/SMAD3:SMAD4 heterotrimer regulates transcription"/>
</dbReference>
<dbReference type="Reactome" id="R-CEL-8939236">
    <property type="pathway name" value="RUNX1 regulates transcription of genes involved in differentiation of HSCs"/>
</dbReference>
<dbReference type="Reactome" id="R-CEL-8951671">
    <property type="pathway name" value="RUNX3 regulates YAP1-mediated transcription"/>
</dbReference>
<dbReference type="Reactome" id="R-CEL-9860927">
    <property type="pathway name" value="Turbulent (oscillatory, disturbed) flow shear stress activates signaling by PIEZO1 and integrins in endothelial cells"/>
</dbReference>
<dbReference type="PRO" id="PR:Q19404"/>
<dbReference type="Proteomes" id="UP000001940">
    <property type="component" value="Chromosome X"/>
</dbReference>
<dbReference type="Bgee" id="WBGene00008748">
    <property type="expression patterns" value="Expressed in pharyngeal muscle cell (C elegans) and 3 other cell types or tissues"/>
</dbReference>
<dbReference type="GO" id="GO:0005930">
    <property type="term" value="C:axoneme"/>
    <property type="evidence" value="ECO:0000314"/>
    <property type="project" value="UniProtKB"/>
</dbReference>
<dbReference type="GO" id="GO:0005911">
    <property type="term" value="C:cell-cell junction"/>
    <property type="evidence" value="ECO:0000250"/>
    <property type="project" value="UniProtKB"/>
</dbReference>
<dbReference type="GO" id="GO:0097546">
    <property type="term" value="C:ciliary base"/>
    <property type="evidence" value="ECO:0000314"/>
    <property type="project" value="UniProtKB"/>
</dbReference>
<dbReference type="GO" id="GO:0005737">
    <property type="term" value="C:cytoplasm"/>
    <property type="evidence" value="ECO:0000314"/>
    <property type="project" value="WormBase"/>
</dbReference>
<dbReference type="GO" id="GO:0005634">
    <property type="term" value="C:nucleus"/>
    <property type="evidence" value="ECO:0000314"/>
    <property type="project" value="WormBase"/>
</dbReference>
<dbReference type="GO" id="GO:0090575">
    <property type="term" value="C:RNA polymerase II transcription regulator complex"/>
    <property type="evidence" value="ECO:0000353"/>
    <property type="project" value="WormBase"/>
</dbReference>
<dbReference type="GO" id="GO:0019901">
    <property type="term" value="F:protein kinase binding"/>
    <property type="evidence" value="ECO:0000353"/>
    <property type="project" value="WormBase"/>
</dbReference>
<dbReference type="GO" id="GO:0061629">
    <property type="term" value="F:RNA polymerase II-specific DNA-binding transcription factor binding"/>
    <property type="evidence" value="ECO:0000353"/>
    <property type="project" value="WormBase"/>
</dbReference>
<dbReference type="GO" id="GO:0003713">
    <property type="term" value="F:transcription coactivator activity"/>
    <property type="evidence" value="ECO:0000318"/>
    <property type="project" value="GO_Central"/>
</dbReference>
<dbReference type="GO" id="GO:0030010">
    <property type="term" value="P:establishment of cell polarity"/>
    <property type="evidence" value="ECO:0000315"/>
    <property type="project" value="WormBase"/>
</dbReference>
<dbReference type="GO" id="GO:0035329">
    <property type="term" value="P:hippo signaling"/>
    <property type="evidence" value="ECO:0000318"/>
    <property type="project" value="GO_Central"/>
</dbReference>
<dbReference type="GO" id="GO:0045944">
    <property type="term" value="P:positive regulation of transcription by RNA polymerase II"/>
    <property type="evidence" value="ECO:0000316"/>
    <property type="project" value="WormBase"/>
</dbReference>
<dbReference type="CDD" id="cd00201">
    <property type="entry name" value="WW"/>
    <property type="match status" value="1"/>
</dbReference>
<dbReference type="Gene3D" id="2.20.70.10">
    <property type="match status" value="1"/>
</dbReference>
<dbReference type="InterPro" id="IPR001202">
    <property type="entry name" value="WW_dom"/>
</dbReference>
<dbReference type="InterPro" id="IPR036020">
    <property type="entry name" value="WW_dom_sf"/>
</dbReference>
<dbReference type="InterPro" id="IPR051583">
    <property type="entry name" value="YAP1"/>
</dbReference>
<dbReference type="PANTHER" id="PTHR17616:SF8">
    <property type="entry name" value="TRANSCRIPTIONAL COACTIVATOR YORKIE"/>
    <property type="match status" value="1"/>
</dbReference>
<dbReference type="PANTHER" id="PTHR17616">
    <property type="entry name" value="YES-ASSOCIATED PROTEIN YAP1 FAMILY MEMBER"/>
    <property type="match status" value="1"/>
</dbReference>
<dbReference type="Pfam" id="PF00397">
    <property type="entry name" value="WW"/>
    <property type="match status" value="1"/>
</dbReference>
<dbReference type="SMART" id="SM00456">
    <property type="entry name" value="WW"/>
    <property type="match status" value="1"/>
</dbReference>
<dbReference type="SUPFAM" id="SSF51045">
    <property type="entry name" value="WW domain"/>
    <property type="match status" value="1"/>
</dbReference>
<dbReference type="PROSITE" id="PS01159">
    <property type="entry name" value="WW_DOMAIN_1"/>
    <property type="match status" value="1"/>
</dbReference>
<dbReference type="PROSITE" id="PS50020">
    <property type="entry name" value="WW_DOMAIN_2"/>
    <property type="match status" value="1"/>
</dbReference>
<organism evidence="7">
    <name type="scientific">Caenorhabditis elegans</name>
    <dbReference type="NCBI Taxonomy" id="6239"/>
    <lineage>
        <taxon>Eukaryota</taxon>
        <taxon>Metazoa</taxon>
        <taxon>Ecdysozoa</taxon>
        <taxon>Nematoda</taxon>
        <taxon>Chromadorea</taxon>
        <taxon>Rhabditida</taxon>
        <taxon>Rhabditina</taxon>
        <taxon>Rhabditomorpha</taxon>
        <taxon>Rhabditoidea</taxon>
        <taxon>Rhabditidae</taxon>
        <taxon>Peloderinae</taxon>
        <taxon>Caenorhabditis</taxon>
    </lineage>
</organism>
<accession>Q19404</accession>
<gene>
    <name evidence="8" type="primary">yap-1</name>
    <name evidence="8" type="ORF">F13E6.4</name>
</gene>